<proteinExistence type="inferred from homology"/>
<comment type="function">
    <text evidence="1">DNA repair enzyme involved in the repair of deaminated bases. Selectively cleaves double-stranded DNA at the second phosphodiester bond 3' to a deoxyinosine leaving behind the intact lesion on the nicked DNA.</text>
</comment>
<comment type="catalytic activity">
    <reaction evidence="1">
        <text>Endonucleolytic cleavage at apurinic or apyrimidinic sites to products with a 5'-phosphate.</text>
        <dbReference type="EC" id="3.1.21.7"/>
    </reaction>
</comment>
<comment type="cofactor">
    <cofactor evidence="1">
        <name>Mg(2+)</name>
        <dbReference type="ChEBI" id="CHEBI:18420"/>
    </cofactor>
</comment>
<comment type="subcellular location">
    <subcellularLocation>
        <location evidence="1">Cytoplasm</location>
    </subcellularLocation>
</comment>
<comment type="similarity">
    <text evidence="1">Belongs to the endonuclease V family.</text>
</comment>
<protein>
    <recommendedName>
        <fullName evidence="1">Endonuclease V</fullName>
        <ecNumber evidence="1">3.1.21.7</ecNumber>
    </recommendedName>
    <alternativeName>
        <fullName evidence="1">Deoxyinosine 3'endonuclease</fullName>
    </alternativeName>
    <alternativeName>
        <fullName evidence="1">Deoxyribonuclease V</fullName>
        <shortName evidence="1">DNase V</shortName>
    </alternativeName>
</protein>
<evidence type="ECO:0000255" key="1">
    <source>
        <dbReference type="HAMAP-Rule" id="MF_00801"/>
    </source>
</evidence>
<organism>
    <name type="scientific">Thermotoga sp. (strain RQ2)</name>
    <dbReference type="NCBI Taxonomy" id="126740"/>
    <lineage>
        <taxon>Bacteria</taxon>
        <taxon>Thermotogati</taxon>
        <taxon>Thermotogota</taxon>
        <taxon>Thermotogae</taxon>
        <taxon>Thermotogales</taxon>
        <taxon>Thermotogaceae</taxon>
        <taxon>Thermotoga</taxon>
    </lineage>
</organism>
<reference key="1">
    <citation type="journal article" date="2011" name="J. Bacteriol.">
        <title>Genome sequence of Thermotoga sp. strain RQ2, a hyperthermophilic bacterium isolated from a geothermally heated region of the seafloor near Ribeira Quente, the Azores.</title>
        <authorList>
            <person name="Swithers K.S."/>
            <person name="DiPippo J.L."/>
            <person name="Bruce D.C."/>
            <person name="Detter C."/>
            <person name="Tapia R."/>
            <person name="Han S."/>
            <person name="Saunders E."/>
            <person name="Goodwin L.A."/>
            <person name="Han J."/>
            <person name="Woyke T."/>
            <person name="Pitluck S."/>
            <person name="Pennacchio L."/>
            <person name="Nolan M."/>
            <person name="Mikhailova N."/>
            <person name="Lykidis A."/>
            <person name="Land M.L."/>
            <person name="Brettin T."/>
            <person name="Stetter K.O."/>
            <person name="Nelson K.E."/>
            <person name="Gogarten J.P."/>
            <person name="Noll K.M."/>
        </authorList>
    </citation>
    <scope>NUCLEOTIDE SEQUENCE [LARGE SCALE GENOMIC DNA]</scope>
    <source>
        <strain>RQ2</strain>
    </source>
</reference>
<gene>
    <name evidence="1" type="primary">nfi</name>
    <name type="ordered locus">TRQ2_0954</name>
</gene>
<dbReference type="EC" id="3.1.21.7" evidence="1"/>
<dbReference type="EMBL" id="CP000969">
    <property type="protein sequence ID" value="ACB09305.1"/>
    <property type="molecule type" value="Genomic_DNA"/>
</dbReference>
<dbReference type="RefSeq" id="WP_012310840.1">
    <property type="nucleotide sequence ID" value="NC_010483.1"/>
</dbReference>
<dbReference type="SMR" id="B1LAF7"/>
<dbReference type="KEGG" id="trq:TRQ2_0954"/>
<dbReference type="HOGENOM" id="CLU_047631_1_1_0"/>
<dbReference type="Proteomes" id="UP000001687">
    <property type="component" value="Chromosome"/>
</dbReference>
<dbReference type="GO" id="GO:0005737">
    <property type="term" value="C:cytoplasm"/>
    <property type="evidence" value="ECO:0007669"/>
    <property type="project" value="UniProtKB-SubCell"/>
</dbReference>
<dbReference type="GO" id="GO:0043737">
    <property type="term" value="F:deoxyribonuclease V activity"/>
    <property type="evidence" value="ECO:0007669"/>
    <property type="project" value="UniProtKB-UniRule"/>
</dbReference>
<dbReference type="GO" id="GO:0000287">
    <property type="term" value="F:magnesium ion binding"/>
    <property type="evidence" value="ECO:0007669"/>
    <property type="project" value="UniProtKB-UniRule"/>
</dbReference>
<dbReference type="GO" id="GO:0016891">
    <property type="term" value="F:RNA endonuclease activity, producing 5'-phosphomonoesters"/>
    <property type="evidence" value="ECO:0007669"/>
    <property type="project" value="TreeGrafter"/>
</dbReference>
<dbReference type="GO" id="GO:0003727">
    <property type="term" value="F:single-stranded RNA binding"/>
    <property type="evidence" value="ECO:0007669"/>
    <property type="project" value="TreeGrafter"/>
</dbReference>
<dbReference type="GO" id="GO:0006281">
    <property type="term" value="P:DNA repair"/>
    <property type="evidence" value="ECO:0007669"/>
    <property type="project" value="UniProtKB-UniRule"/>
</dbReference>
<dbReference type="CDD" id="cd06559">
    <property type="entry name" value="Endonuclease_V"/>
    <property type="match status" value="1"/>
</dbReference>
<dbReference type="FunFam" id="3.30.2170.10:FF:000008">
    <property type="entry name" value="Endonuclease V"/>
    <property type="match status" value="1"/>
</dbReference>
<dbReference type="Gene3D" id="3.30.2170.10">
    <property type="entry name" value="archaeoglobus fulgidus dsm 4304 superfamily"/>
    <property type="match status" value="1"/>
</dbReference>
<dbReference type="HAMAP" id="MF_00801">
    <property type="entry name" value="Endonuclease_5"/>
    <property type="match status" value="1"/>
</dbReference>
<dbReference type="InterPro" id="IPR007581">
    <property type="entry name" value="Endonuclease-V"/>
</dbReference>
<dbReference type="InterPro" id="IPR053396">
    <property type="entry name" value="Endonuclease_V-like"/>
</dbReference>
<dbReference type="NCBIfam" id="NF041102">
    <property type="entry name" value="endonuc_V_Ttgales"/>
    <property type="match status" value="1"/>
</dbReference>
<dbReference type="PANTHER" id="PTHR28511">
    <property type="entry name" value="ENDONUCLEASE V"/>
    <property type="match status" value="1"/>
</dbReference>
<dbReference type="PANTHER" id="PTHR28511:SF1">
    <property type="entry name" value="ENDONUCLEASE V"/>
    <property type="match status" value="1"/>
</dbReference>
<dbReference type="Pfam" id="PF04493">
    <property type="entry name" value="Endonuclease_5"/>
    <property type="match status" value="1"/>
</dbReference>
<name>NFI_THESQ</name>
<accession>B1LAF7</accession>
<keyword id="KW-0963">Cytoplasm</keyword>
<keyword id="KW-0227">DNA damage</keyword>
<keyword id="KW-0234">DNA repair</keyword>
<keyword id="KW-0255">Endonuclease</keyword>
<keyword id="KW-0378">Hydrolase</keyword>
<keyword id="KW-0460">Magnesium</keyword>
<keyword id="KW-0479">Metal-binding</keyword>
<keyword id="KW-0540">Nuclease</keyword>
<feature type="chain" id="PRO_1000133892" description="Endonuclease V">
    <location>
        <begin position="1"/>
        <end position="225"/>
    </location>
</feature>
<feature type="binding site" evidence="1">
    <location>
        <position position="43"/>
    </location>
    <ligand>
        <name>Mg(2+)</name>
        <dbReference type="ChEBI" id="CHEBI:18420"/>
    </ligand>
</feature>
<feature type="binding site" evidence="1">
    <location>
        <position position="110"/>
    </location>
    <ligand>
        <name>Mg(2+)</name>
        <dbReference type="ChEBI" id="CHEBI:18420"/>
    </ligand>
</feature>
<feature type="site" description="Interaction with target DNA" evidence="1">
    <location>
        <position position="80"/>
    </location>
</feature>
<sequence length="225" mass="25472">MDYRKLHGWDLSPEEAIKVQNELRKKIKLVPYEGEPEYVAGVDLSFPGKKEGLAVIVVLEYPSFRIVEIVSERGEITFPYIPGLLAFREGPLFLKAWEKLRTKPDVVVFDGQGLAHPRKLGIASHMGLFIEIPTIGVAKSRLYGTFKMPEDKRCSWSYLYDGEEIIGCVVRTKEGSAPVFVSPGHLMDVESSKRLVKAFTLPGRRIPEPTRLAHIYTQRLKKGLF</sequence>